<gene>
    <name evidence="1" type="primary">hemL1</name>
    <name type="synonym">gsaB</name>
    <name type="ordered locus">BH0943</name>
</gene>
<name>GSA1_HALH5</name>
<feature type="chain" id="PRO_0000120394" description="Glutamate-1-semialdehyde 2,1-aminomutase 1">
    <location>
        <begin position="1"/>
        <end position="437"/>
    </location>
</feature>
<feature type="modified residue" description="N6-(pyridoxal phosphate)lysine" evidence="1">
    <location>
        <position position="268"/>
    </location>
</feature>
<protein>
    <recommendedName>
        <fullName evidence="1">Glutamate-1-semialdehyde 2,1-aminomutase 1</fullName>
        <shortName evidence="1">GSA 1</shortName>
        <ecNumber evidence="1">5.4.3.8</ecNumber>
    </recommendedName>
    <alternativeName>
        <fullName evidence="1">Glutamate-1-semialdehyde aminotransferase 1</fullName>
        <shortName evidence="1">GSA-AT 1</shortName>
    </alternativeName>
</protein>
<proteinExistence type="inferred from homology"/>
<accession>Q9KEB0</accession>
<sequence>MNRSRSESLFQKAQSLIVGGVNSPSRSFKAVGGGAPVFMEKAKGAYFWDVDGNQYIDYLAAYGPIITGHAHPHITNAIQRAAENGVLYGTPTKLENQFASMLQQAIPSLEKVRFVNSGTEAVMTTIRVARAYTGRDKIIKFAGCYHGHSDLVLVAAGSGPSTLGTPDSAGVTKNIAEEVITVPFNQLDSLKEALDHWGEEVAAVLVEPIVGNFGIVEPHEGFLEGVNELAHNAGALVIYDEVITAFRFMYEGAQNYVGVEPDMTALGKIIGGGLPIGAYGGRIDIMEKVAPLGPAYQAGTMAGNPASMSAGIACLEVLQEEGLYDELDRKGAILEKGIKAHAEAHGITISINRLKGALTVYFTDETVTCYEQAERSDGEKFSLFFKEMLNQGINLAPSKYEAWFLTIAHTDEDIEKTLQAVDHAFSVMAAKGYHLKR</sequence>
<reference key="1">
    <citation type="journal article" date="2000" name="Nucleic Acids Res.">
        <title>Complete genome sequence of the alkaliphilic bacterium Bacillus halodurans and genomic sequence comparison with Bacillus subtilis.</title>
        <authorList>
            <person name="Takami H."/>
            <person name="Nakasone K."/>
            <person name="Takaki Y."/>
            <person name="Maeno G."/>
            <person name="Sasaki R."/>
            <person name="Masui N."/>
            <person name="Fuji F."/>
            <person name="Hirama C."/>
            <person name="Nakamura Y."/>
            <person name="Ogasawara N."/>
            <person name="Kuhara S."/>
            <person name="Horikoshi K."/>
        </authorList>
    </citation>
    <scope>NUCLEOTIDE SEQUENCE [LARGE SCALE GENOMIC DNA]</scope>
    <source>
        <strain>ATCC BAA-125 / DSM 18197 / FERM 7344 / JCM 9153 / C-125</strain>
    </source>
</reference>
<dbReference type="EC" id="5.4.3.8" evidence="1"/>
<dbReference type="EMBL" id="BA000004">
    <property type="protein sequence ID" value="BAB04662.1"/>
    <property type="molecule type" value="Genomic_DNA"/>
</dbReference>
<dbReference type="PIR" id="G83767">
    <property type="entry name" value="G83767"/>
</dbReference>
<dbReference type="RefSeq" id="WP_010897115.1">
    <property type="nucleotide sequence ID" value="NC_002570.2"/>
</dbReference>
<dbReference type="SMR" id="Q9KEB0"/>
<dbReference type="STRING" id="272558.gene:10726817"/>
<dbReference type="KEGG" id="bha:BH0943"/>
<dbReference type="eggNOG" id="COG0001">
    <property type="taxonomic scope" value="Bacteria"/>
</dbReference>
<dbReference type="HOGENOM" id="CLU_016922_1_5_9"/>
<dbReference type="OrthoDB" id="9807885at2"/>
<dbReference type="UniPathway" id="UPA00251">
    <property type="reaction ID" value="UER00317"/>
</dbReference>
<dbReference type="Proteomes" id="UP000001258">
    <property type="component" value="Chromosome"/>
</dbReference>
<dbReference type="GO" id="GO:0005737">
    <property type="term" value="C:cytoplasm"/>
    <property type="evidence" value="ECO:0007669"/>
    <property type="project" value="UniProtKB-SubCell"/>
</dbReference>
<dbReference type="GO" id="GO:0042286">
    <property type="term" value="F:glutamate-1-semialdehyde 2,1-aminomutase activity"/>
    <property type="evidence" value="ECO:0007669"/>
    <property type="project" value="UniProtKB-UniRule"/>
</dbReference>
<dbReference type="GO" id="GO:0030170">
    <property type="term" value="F:pyridoxal phosphate binding"/>
    <property type="evidence" value="ECO:0007669"/>
    <property type="project" value="InterPro"/>
</dbReference>
<dbReference type="GO" id="GO:0008483">
    <property type="term" value="F:transaminase activity"/>
    <property type="evidence" value="ECO:0007669"/>
    <property type="project" value="InterPro"/>
</dbReference>
<dbReference type="GO" id="GO:0006782">
    <property type="term" value="P:protoporphyrinogen IX biosynthetic process"/>
    <property type="evidence" value="ECO:0007669"/>
    <property type="project" value="UniProtKB-UniRule"/>
</dbReference>
<dbReference type="CDD" id="cd00610">
    <property type="entry name" value="OAT_like"/>
    <property type="match status" value="1"/>
</dbReference>
<dbReference type="FunFam" id="3.40.640.10:FF:000021">
    <property type="entry name" value="Glutamate-1-semialdehyde 2,1-aminomutase"/>
    <property type="match status" value="1"/>
</dbReference>
<dbReference type="Gene3D" id="3.90.1150.10">
    <property type="entry name" value="Aspartate Aminotransferase, domain 1"/>
    <property type="match status" value="1"/>
</dbReference>
<dbReference type="Gene3D" id="3.40.640.10">
    <property type="entry name" value="Type I PLP-dependent aspartate aminotransferase-like (Major domain)"/>
    <property type="match status" value="1"/>
</dbReference>
<dbReference type="HAMAP" id="MF_00375">
    <property type="entry name" value="HemL_aminotrans_3"/>
    <property type="match status" value="1"/>
</dbReference>
<dbReference type="InterPro" id="IPR004639">
    <property type="entry name" value="4pyrrol_synth_GluAld_NH2Trfase"/>
</dbReference>
<dbReference type="InterPro" id="IPR005814">
    <property type="entry name" value="Aminotrans_3"/>
</dbReference>
<dbReference type="InterPro" id="IPR049704">
    <property type="entry name" value="Aminotrans_3_PPA_site"/>
</dbReference>
<dbReference type="InterPro" id="IPR015424">
    <property type="entry name" value="PyrdxlP-dep_Trfase"/>
</dbReference>
<dbReference type="InterPro" id="IPR015421">
    <property type="entry name" value="PyrdxlP-dep_Trfase_major"/>
</dbReference>
<dbReference type="InterPro" id="IPR015422">
    <property type="entry name" value="PyrdxlP-dep_Trfase_small"/>
</dbReference>
<dbReference type="NCBIfam" id="TIGR00713">
    <property type="entry name" value="hemL"/>
    <property type="match status" value="1"/>
</dbReference>
<dbReference type="NCBIfam" id="NF000818">
    <property type="entry name" value="PRK00062.1"/>
    <property type="match status" value="1"/>
</dbReference>
<dbReference type="NCBIfam" id="NF009055">
    <property type="entry name" value="PRK12389.1"/>
    <property type="match status" value="1"/>
</dbReference>
<dbReference type="PANTHER" id="PTHR43713">
    <property type="entry name" value="GLUTAMATE-1-SEMIALDEHYDE 2,1-AMINOMUTASE"/>
    <property type="match status" value="1"/>
</dbReference>
<dbReference type="PANTHER" id="PTHR43713:SF1">
    <property type="entry name" value="GLUTAMATE-1-SEMIALDEHYDE 2,1-AMINOMUTASE 2"/>
    <property type="match status" value="1"/>
</dbReference>
<dbReference type="Pfam" id="PF00202">
    <property type="entry name" value="Aminotran_3"/>
    <property type="match status" value="1"/>
</dbReference>
<dbReference type="SUPFAM" id="SSF53383">
    <property type="entry name" value="PLP-dependent transferases"/>
    <property type="match status" value="1"/>
</dbReference>
<dbReference type="PROSITE" id="PS00600">
    <property type="entry name" value="AA_TRANSFER_CLASS_3"/>
    <property type="match status" value="1"/>
</dbReference>
<comment type="catalytic activity">
    <reaction evidence="1">
        <text>(S)-4-amino-5-oxopentanoate = 5-aminolevulinate</text>
        <dbReference type="Rhea" id="RHEA:14265"/>
        <dbReference type="ChEBI" id="CHEBI:57501"/>
        <dbReference type="ChEBI" id="CHEBI:356416"/>
        <dbReference type="EC" id="5.4.3.8"/>
    </reaction>
</comment>
<comment type="cofactor">
    <cofactor evidence="1">
        <name>pyridoxal 5'-phosphate</name>
        <dbReference type="ChEBI" id="CHEBI:597326"/>
    </cofactor>
</comment>
<comment type="pathway">
    <text evidence="1">Porphyrin-containing compound metabolism; protoporphyrin-IX biosynthesis; 5-aminolevulinate from L-glutamyl-tRNA(Glu): step 2/2.</text>
</comment>
<comment type="subunit">
    <text evidence="1">Homodimer.</text>
</comment>
<comment type="subcellular location">
    <subcellularLocation>
        <location evidence="1">Cytoplasm</location>
    </subcellularLocation>
</comment>
<comment type="similarity">
    <text evidence="1">Belongs to the class-III pyridoxal-phosphate-dependent aminotransferase family. HemL subfamily.</text>
</comment>
<evidence type="ECO:0000255" key="1">
    <source>
        <dbReference type="HAMAP-Rule" id="MF_00375"/>
    </source>
</evidence>
<organism>
    <name type="scientific">Halalkalibacterium halodurans (strain ATCC BAA-125 / DSM 18197 / FERM 7344 / JCM 9153 / C-125)</name>
    <name type="common">Bacillus halodurans</name>
    <dbReference type="NCBI Taxonomy" id="272558"/>
    <lineage>
        <taxon>Bacteria</taxon>
        <taxon>Bacillati</taxon>
        <taxon>Bacillota</taxon>
        <taxon>Bacilli</taxon>
        <taxon>Bacillales</taxon>
        <taxon>Bacillaceae</taxon>
        <taxon>Halalkalibacterium (ex Joshi et al. 2022)</taxon>
    </lineage>
</organism>
<keyword id="KW-0963">Cytoplasm</keyword>
<keyword id="KW-0413">Isomerase</keyword>
<keyword id="KW-0627">Porphyrin biosynthesis</keyword>
<keyword id="KW-0663">Pyridoxal phosphate</keyword>
<keyword id="KW-1185">Reference proteome</keyword>